<reference key="1">
    <citation type="journal article" date="2011" name="J. Bacteriol.">
        <title>Comparative genomics of 28 Salmonella enterica isolates: evidence for CRISPR-mediated adaptive sublineage evolution.</title>
        <authorList>
            <person name="Fricke W.F."/>
            <person name="Mammel M.K."/>
            <person name="McDermott P.F."/>
            <person name="Tartera C."/>
            <person name="White D.G."/>
            <person name="Leclerc J.E."/>
            <person name="Ravel J."/>
            <person name="Cebula T.A."/>
        </authorList>
    </citation>
    <scope>NUCLEOTIDE SEQUENCE [LARGE SCALE GENOMIC DNA]</scope>
    <source>
        <strain>CT_02021853</strain>
    </source>
</reference>
<comment type="function">
    <text evidence="1">Catalyzes the irreversible cleavage of the glycosidic bond in both 5'-methylthioadenosine (MTA) and S-adenosylhomocysteine (SAH/AdoHcy) to adenine and the corresponding thioribose, 5'-methylthioribose and S-ribosylhomocysteine, respectively. Also cleaves 5'-deoxyadenosine, a toxic by-product of radical S-adenosylmethionine (SAM) enzymes, into 5-deoxyribose and adenine. Thus, is required for in vivo function of the radical SAM enzymes biotin synthase and lipoic acid synthase, that are inhibited by 5'-deoxyadenosine accumulation.</text>
</comment>
<comment type="catalytic activity">
    <reaction evidence="1">
        <text>S-adenosyl-L-homocysteine + H2O = S-(5-deoxy-D-ribos-5-yl)-L-homocysteine + adenine</text>
        <dbReference type="Rhea" id="RHEA:17805"/>
        <dbReference type="ChEBI" id="CHEBI:15377"/>
        <dbReference type="ChEBI" id="CHEBI:16708"/>
        <dbReference type="ChEBI" id="CHEBI:57856"/>
        <dbReference type="ChEBI" id="CHEBI:58195"/>
        <dbReference type="EC" id="3.2.2.9"/>
    </reaction>
</comment>
<comment type="catalytic activity">
    <reaction evidence="1">
        <text>S-methyl-5'-thioadenosine + H2O = 5-(methylsulfanyl)-D-ribose + adenine</text>
        <dbReference type="Rhea" id="RHEA:13617"/>
        <dbReference type="ChEBI" id="CHEBI:15377"/>
        <dbReference type="ChEBI" id="CHEBI:16708"/>
        <dbReference type="ChEBI" id="CHEBI:17509"/>
        <dbReference type="ChEBI" id="CHEBI:78440"/>
        <dbReference type="EC" id="3.2.2.9"/>
    </reaction>
</comment>
<comment type="catalytic activity">
    <reaction evidence="1">
        <text>5'-deoxyadenosine + H2O = 5-deoxy-D-ribose + adenine</text>
        <dbReference type="Rhea" id="RHEA:29859"/>
        <dbReference type="ChEBI" id="CHEBI:15377"/>
        <dbReference type="ChEBI" id="CHEBI:16708"/>
        <dbReference type="ChEBI" id="CHEBI:17319"/>
        <dbReference type="ChEBI" id="CHEBI:149540"/>
        <dbReference type="EC" id="3.2.2.9"/>
    </reaction>
    <physiologicalReaction direction="left-to-right" evidence="1">
        <dbReference type="Rhea" id="RHEA:29860"/>
    </physiologicalReaction>
</comment>
<comment type="pathway">
    <text evidence="1">Amino-acid biosynthesis; L-methionine biosynthesis via salvage pathway; S-methyl-5-thio-alpha-D-ribose 1-phosphate from S-methyl-5'-thioadenosine (hydrolase route): step 1/2.</text>
</comment>
<comment type="subunit">
    <text evidence="1">Homodimer.</text>
</comment>
<comment type="similarity">
    <text evidence="1">Belongs to the PNP/UDP phosphorylase family. MtnN subfamily.</text>
</comment>
<evidence type="ECO:0000255" key="1">
    <source>
        <dbReference type="HAMAP-Rule" id="MF_01684"/>
    </source>
</evidence>
<sequence length="232" mass="24456">MKIGIIGAMEEEVTLLRDKIDNRQTITLGGCEIYTGQLNGTEVALLKSGIGKVAAALGATLLLEHSKPDVIINTGSAGGLASTLKVGDIVVSDEARYHDADVTAFGYEYGQLPGCPAGFKADDKLIAAAESCIRELNLNAVRGLIVSGDAFINGSVGLAKIRHNFPDAVAVEMEATAIAHVCYNFNVPFVVVRAISDVADQQSHLSFDEFLAVAAKQSTLMVETLVQKLAHG</sequence>
<protein>
    <recommendedName>
        <fullName evidence="1">5'-methylthioadenosine/S-adenosylhomocysteine nucleosidase</fullName>
        <shortName evidence="1">MTA/SAH nucleosidase</shortName>
        <shortName evidence="1">MTAN</shortName>
        <ecNumber evidence="1">3.2.2.9</ecNumber>
    </recommendedName>
    <alternativeName>
        <fullName evidence="1">5'-deoxyadenosine nucleosidase</fullName>
        <shortName evidence="1">DOA nucleosidase</shortName>
        <shortName evidence="1">dAdo nucleosidase</shortName>
    </alternativeName>
    <alternativeName>
        <fullName evidence="1">5'-methylthioadenosine nucleosidase</fullName>
        <shortName evidence="1">MTA nucleosidase</shortName>
    </alternativeName>
    <alternativeName>
        <fullName evidence="1">S-adenosylhomocysteine nucleosidase</fullName>
        <shortName evidence="1">AdoHcy nucleosidase</shortName>
        <shortName evidence="1">SAH nucleosidase</shortName>
        <shortName evidence="1">SRH nucleosidase</shortName>
    </alternativeName>
</protein>
<organism>
    <name type="scientific">Salmonella dublin (strain CT_02021853)</name>
    <dbReference type="NCBI Taxonomy" id="439851"/>
    <lineage>
        <taxon>Bacteria</taxon>
        <taxon>Pseudomonadati</taxon>
        <taxon>Pseudomonadota</taxon>
        <taxon>Gammaproteobacteria</taxon>
        <taxon>Enterobacterales</taxon>
        <taxon>Enterobacteriaceae</taxon>
        <taxon>Salmonella</taxon>
    </lineage>
</organism>
<proteinExistence type="inferred from homology"/>
<gene>
    <name evidence="1" type="primary">mtnN</name>
    <name type="ordered locus">SeD_A0227</name>
</gene>
<name>MTNN_SALDC</name>
<keyword id="KW-0028">Amino-acid biosynthesis</keyword>
<keyword id="KW-0378">Hydrolase</keyword>
<keyword id="KW-0486">Methionine biosynthesis</keyword>
<dbReference type="EC" id="3.2.2.9" evidence="1"/>
<dbReference type="EMBL" id="CP001144">
    <property type="protein sequence ID" value="ACH74511.1"/>
    <property type="molecule type" value="Genomic_DNA"/>
</dbReference>
<dbReference type="RefSeq" id="WP_000689827.1">
    <property type="nucleotide sequence ID" value="NC_011205.1"/>
</dbReference>
<dbReference type="SMR" id="B5FJ06"/>
<dbReference type="KEGG" id="sed:SeD_A0227"/>
<dbReference type="HOGENOM" id="CLU_031248_2_2_6"/>
<dbReference type="UniPathway" id="UPA00904">
    <property type="reaction ID" value="UER00871"/>
</dbReference>
<dbReference type="Proteomes" id="UP000008322">
    <property type="component" value="Chromosome"/>
</dbReference>
<dbReference type="GO" id="GO:0005829">
    <property type="term" value="C:cytosol"/>
    <property type="evidence" value="ECO:0007669"/>
    <property type="project" value="TreeGrafter"/>
</dbReference>
<dbReference type="GO" id="GO:0008782">
    <property type="term" value="F:adenosylhomocysteine nucleosidase activity"/>
    <property type="evidence" value="ECO:0007669"/>
    <property type="project" value="UniProtKB-UniRule"/>
</dbReference>
<dbReference type="GO" id="GO:0008930">
    <property type="term" value="F:methylthioadenosine nucleosidase activity"/>
    <property type="evidence" value="ECO:0007669"/>
    <property type="project" value="UniProtKB-UniRule"/>
</dbReference>
<dbReference type="GO" id="GO:0019509">
    <property type="term" value="P:L-methionine salvage from methylthioadenosine"/>
    <property type="evidence" value="ECO:0007669"/>
    <property type="project" value="UniProtKB-UniRule"/>
</dbReference>
<dbReference type="GO" id="GO:0019284">
    <property type="term" value="P:L-methionine salvage from S-adenosylmethionine"/>
    <property type="evidence" value="ECO:0007669"/>
    <property type="project" value="TreeGrafter"/>
</dbReference>
<dbReference type="GO" id="GO:0046124">
    <property type="term" value="P:purine deoxyribonucleoside catabolic process"/>
    <property type="evidence" value="ECO:0007669"/>
    <property type="project" value="UniProtKB-UniRule"/>
</dbReference>
<dbReference type="CDD" id="cd09008">
    <property type="entry name" value="MTAN"/>
    <property type="match status" value="1"/>
</dbReference>
<dbReference type="FunFam" id="3.40.50.1580:FF:000001">
    <property type="entry name" value="MTA/SAH nucleosidase family protein"/>
    <property type="match status" value="1"/>
</dbReference>
<dbReference type="Gene3D" id="3.40.50.1580">
    <property type="entry name" value="Nucleoside phosphorylase domain"/>
    <property type="match status" value="1"/>
</dbReference>
<dbReference type="HAMAP" id="MF_01684">
    <property type="entry name" value="Salvage_MtnN"/>
    <property type="match status" value="1"/>
</dbReference>
<dbReference type="InterPro" id="IPR010049">
    <property type="entry name" value="MTA_SAH_Nsdase"/>
</dbReference>
<dbReference type="InterPro" id="IPR000845">
    <property type="entry name" value="Nucleoside_phosphorylase_d"/>
</dbReference>
<dbReference type="InterPro" id="IPR035994">
    <property type="entry name" value="Nucleoside_phosphorylase_sf"/>
</dbReference>
<dbReference type="NCBIfam" id="TIGR01704">
    <property type="entry name" value="MTA_SAH-Nsdase"/>
    <property type="match status" value="1"/>
</dbReference>
<dbReference type="NCBIfam" id="NF004079">
    <property type="entry name" value="PRK05584.1"/>
    <property type="match status" value="1"/>
</dbReference>
<dbReference type="PANTHER" id="PTHR46832">
    <property type="entry name" value="5'-METHYLTHIOADENOSINE/S-ADENOSYLHOMOCYSTEINE NUCLEOSIDASE"/>
    <property type="match status" value="1"/>
</dbReference>
<dbReference type="PANTHER" id="PTHR46832:SF1">
    <property type="entry name" value="5'-METHYLTHIOADENOSINE_S-ADENOSYLHOMOCYSTEINE NUCLEOSIDASE"/>
    <property type="match status" value="1"/>
</dbReference>
<dbReference type="Pfam" id="PF01048">
    <property type="entry name" value="PNP_UDP_1"/>
    <property type="match status" value="1"/>
</dbReference>
<dbReference type="SUPFAM" id="SSF53167">
    <property type="entry name" value="Purine and uridine phosphorylases"/>
    <property type="match status" value="1"/>
</dbReference>
<feature type="chain" id="PRO_0000359329" description="5'-methylthioadenosine/S-adenosylhomocysteine nucleosidase">
    <location>
        <begin position="1"/>
        <end position="232"/>
    </location>
</feature>
<feature type="active site" description="Proton acceptor" evidence="1">
    <location>
        <position position="12"/>
    </location>
</feature>
<feature type="active site" description="Proton donor" evidence="1">
    <location>
        <position position="197"/>
    </location>
</feature>
<feature type="binding site" evidence="1">
    <location>
        <position position="78"/>
    </location>
    <ligand>
        <name>substrate</name>
    </ligand>
</feature>
<feature type="binding site" evidence="1">
    <location>
        <position position="152"/>
    </location>
    <ligand>
        <name>substrate</name>
    </ligand>
</feature>
<feature type="binding site" evidence="1">
    <location>
        <begin position="173"/>
        <end position="174"/>
    </location>
    <ligand>
        <name>substrate</name>
    </ligand>
</feature>
<accession>B5FJ06</accession>